<proteinExistence type="evidence at protein level"/>
<feature type="chain" id="PRO_0000090644" description="Mitochondrial 2-oxodicarboxylate carrier">
    <location>
        <begin position="1"/>
        <end position="299"/>
    </location>
</feature>
<feature type="transmembrane region" description="Helical; Name=1" evidence="1">
    <location>
        <begin position="17"/>
        <end position="37"/>
    </location>
</feature>
<feature type="transmembrane region" description="Helical; Name=2" evidence="1">
    <location>
        <begin position="70"/>
        <end position="89"/>
    </location>
</feature>
<feature type="transmembrane region" description="Helical; Name=3" evidence="1">
    <location>
        <begin position="113"/>
        <end position="133"/>
    </location>
</feature>
<feature type="transmembrane region" description="Helical; Name=4" evidence="1">
    <location>
        <begin position="167"/>
        <end position="187"/>
    </location>
</feature>
<feature type="transmembrane region" description="Helical; Name=5" evidence="1">
    <location>
        <begin position="205"/>
        <end position="225"/>
    </location>
</feature>
<feature type="transmembrane region" description="Helical; Name=6" evidence="1">
    <location>
        <begin position="277"/>
        <end position="297"/>
    </location>
</feature>
<feature type="repeat" description="Solcar 1">
    <location>
        <begin position="11"/>
        <end position="100"/>
    </location>
</feature>
<feature type="repeat" description="Solcar 2">
    <location>
        <begin position="107"/>
        <end position="196"/>
    </location>
</feature>
<feature type="repeat" description="Solcar 3">
    <location>
        <begin position="205"/>
        <end position="294"/>
    </location>
</feature>
<feature type="splice variant" id="VSP_046690" description="In isoform 2." evidence="5">
    <location>
        <position position="299"/>
    </location>
</feature>
<feature type="sequence variant" id="VAR_083870" description="In MTDPS18; loss of 2-oxoglutarate transporter activity; dbSNP:rs1389068504." evidence="3">
    <original>K</original>
    <variation>R</variation>
    <location>
        <position position="232"/>
    </location>
</feature>
<feature type="sequence variant" id="VAR_050131" description="In dbSNP:rs17104991.">
    <original>W</original>
    <variation>C</variation>
    <location>
        <position position="299"/>
    </location>
</feature>
<protein>
    <recommendedName>
        <fullName>Mitochondrial 2-oxodicarboxylate carrier</fullName>
        <shortName evidence="4">ODC</shortName>
    </recommendedName>
    <alternativeName>
        <fullName evidence="4">Mitochondrial 2-oxoadipate carrier</fullName>
    </alternativeName>
    <alternativeName>
        <fullName>Solute carrier family 25 member 21</fullName>
    </alternativeName>
</protein>
<evidence type="ECO:0000255" key="1"/>
<evidence type="ECO:0000269" key="2">
    <source>
    </source>
</evidence>
<evidence type="ECO:0000269" key="3">
    <source>
    </source>
</evidence>
<evidence type="ECO:0000303" key="4">
    <source>
    </source>
</evidence>
<evidence type="ECO:0000303" key="5">
    <source>
    </source>
</evidence>
<evidence type="ECO:0000305" key="6"/>
<evidence type="ECO:0000305" key="7">
    <source>
    </source>
</evidence>
<evidence type="ECO:0000305" key="8">
    <source>
    </source>
</evidence>
<reference key="1">
    <citation type="journal article" date="2001" name="J. Biol. Chem.">
        <title>Identification of the human mitochondrial oxodicarboxylate carrier. Bacterial expression, reconstitution, functional characterization, tissue distribution and chromosomal location.</title>
        <authorList>
            <person name="Fiermonte G."/>
            <person name="Dolce V."/>
            <person name="Palmieri L."/>
            <person name="Ventura M."/>
            <person name="Runswick M.J."/>
            <person name="Palmieri F."/>
            <person name="Walker J.E."/>
        </authorList>
    </citation>
    <scope>NUCLEOTIDE SEQUENCE [MRNA] (ISOFORM 1)</scope>
    <scope>FUNCTION</scope>
    <scope>TISSUE SPECIFICITY</scope>
    <scope>TRANSPORT ACTIVITY</scope>
    <source>
        <tissue>Liver</tissue>
    </source>
</reference>
<reference key="2">
    <citation type="journal article" date="2004" name="Nat. Genet.">
        <title>Complete sequencing and characterization of 21,243 full-length human cDNAs.</title>
        <authorList>
            <person name="Ota T."/>
            <person name="Suzuki Y."/>
            <person name="Nishikawa T."/>
            <person name="Otsuki T."/>
            <person name="Sugiyama T."/>
            <person name="Irie R."/>
            <person name="Wakamatsu A."/>
            <person name="Hayashi K."/>
            <person name="Sato H."/>
            <person name="Nagai K."/>
            <person name="Kimura K."/>
            <person name="Makita H."/>
            <person name="Sekine M."/>
            <person name="Obayashi M."/>
            <person name="Nishi T."/>
            <person name="Shibahara T."/>
            <person name="Tanaka T."/>
            <person name="Ishii S."/>
            <person name="Yamamoto J."/>
            <person name="Saito K."/>
            <person name="Kawai Y."/>
            <person name="Isono Y."/>
            <person name="Nakamura Y."/>
            <person name="Nagahari K."/>
            <person name="Murakami K."/>
            <person name="Yasuda T."/>
            <person name="Iwayanagi T."/>
            <person name="Wagatsuma M."/>
            <person name="Shiratori A."/>
            <person name="Sudo H."/>
            <person name="Hosoiri T."/>
            <person name="Kaku Y."/>
            <person name="Kodaira H."/>
            <person name="Kondo H."/>
            <person name="Sugawara M."/>
            <person name="Takahashi M."/>
            <person name="Kanda K."/>
            <person name="Yokoi T."/>
            <person name="Furuya T."/>
            <person name="Kikkawa E."/>
            <person name="Omura Y."/>
            <person name="Abe K."/>
            <person name="Kamihara K."/>
            <person name="Katsuta N."/>
            <person name="Sato K."/>
            <person name="Tanikawa M."/>
            <person name="Yamazaki M."/>
            <person name="Ninomiya K."/>
            <person name="Ishibashi T."/>
            <person name="Yamashita H."/>
            <person name="Murakawa K."/>
            <person name="Fujimori K."/>
            <person name="Tanai H."/>
            <person name="Kimata M."/>
            <person name="Watanabe M."/>
            <person name="Hiraoka S."/>
            <person name="Chiba Y."/>
            <person name="Ishida S."/>
            <person name="Ono Y."/>
            <person name="Takiguchi S."/>
            <person name="Watanabe S."/>
            <person name="Yosida M."/>
            <person name="Hotuta T."/>
            <person name="Kusano J."/>
            <person name="Kanehori K."/>
            <person name="Takahashi-Fujii A."/>
            <person name="Hara H."/>
            <person name="Tanase T.-O."/>
            <person name="Nomura Y."/>
            <person name="Togiya S."/>
            <person name="Komai F."/>
            <person name="Hara R."/>
            <person name="Takeuchi K."/>
            <person name="Arita M."/>
            <person name="Imose N."/>
            <person name="Musashino K."/>
            <person name="Yuuki H."/>
            <person name="Oshima A."/>
            <person name="Sasaki N."/>
            <person name="Aotsuka S."/>
            <person name="Yoshikawa Y."/>
            <person name="Matsunawa H."/>
            <person name="Ichihara T."/>
            <person name="Shiohata N."/>
            <person name="Sano S."/>
            <person name="Moriya S."/>
            <person name="Momiyama H."/>
            <person name="Satoh N."/>
            <person name="Takami S."/>
            <person name="Terashima Y."/>
            <person name="Suzuki O."/>
            <person name="Nakagawa S."/>
            <person name="Senoh A."/>
            <person name="Mizoguchi H."/>
            <person name="Goto Y."/>
            <person name="Shimizu F."/>
            <person name="Wakebe H."/>
            <person name="Hishigaki H."/>
            <person name="Watanabe T."/>
            <person name="Sugiyama A."/>
            <person name="Takemoto M."/>
            <person name="Kawakami B."/>
            <person name="Yamazaki M."/>
            <person name="Watanabe K."/>
            <person name="Kumagai A."/>
            <person name="Itakura S."/>
            <person name="Fukuzumi Y."/>
            <person name="Fujimori Y."/>
            <person name="Komiyama M."/>
            <person name="Tashiro H."/>
            <person name="Tanigami A."/>
            <person name="Fujiwara T."/>
            <person name="Ono T."/>
            <person name="Yamada K."/>
            <person name="Fujii Y."/>
            <person name="Ozaki K."/>
            <person name="Hirao M."/>
            <person name="Ohmori Y."/>
            <person name="Kawabata A."/>
            <person name="Hikiji T."/>
            <person name="Kobatake N."/>
            <person name="Inagaki H."/>
            <person name="Ikema Y."/>
            <person name="Okamoto S."/>
            <person name="Okitani R."/>
            <person name="Kawakami T."/>
            <person name="Noguchi S."/>
            <person name="Itoh T."/>
            <person name="Shigeta K."/>
            <person name="Senba T."/>
            <person name="Matsumura K."/>
            <person name="Nakajima Y."/>
            <person name="Mizuno T."/>
            <person name="Morinaga M."/>
            <person name="Sasaki M."/>
            <person name="Togashi T."/>
            <person name="Oyama M."/>
            <person name="Hata H."/>
            <person name="Watanabe M."/>
            <person name="Komatsu T."/>
            <person name="Mizushima-Sugano J."/>
            <person name="Satoh T."/>
            <person name="Shirai Y."/>
            <person name="Takahashi Y."/>
            <person name="Nakagawa K."/>
            <person name="Okumura K."/>
            <person name="Nagase T."/>
            <person name="Nomura N."/>
            <person name="Kikuchi H."/>
            <person name="Masuho Y."/>
            <person name="Yamashita R."/>
            <person name="Nakai K."/>
            <person name="Yada T."/>
            <person name="Nakamura Y."/>
            <person name="Ohara O."/>
            <person name="Isogai T."/>
            <person name="Sugano S."/>
        </authorList>
    </citation>
    <scope>NUCLEOTIDE SEQUENCE [LARGE SCALE MRNA] (ISOFORM 2)</scope>
    <source>
        <tissue>Cerebellum</tissue>
    </source>
</reference>
<reference key="3">
    <citation type="journal article" date="2003" name="Nature">
        <title>The DNA sequence and analysis of human chromosome 14.</title>
        <authorList>
            <person name="Heilig R."/>
            <person name="Eckenberg R."/>
            <person name="Petit J.-L."/>
            <person name="Fonknechten N."/>
            <person name="Da Silva C."/>
            <person name="Cattolico L."/>
            <person name="Levy M."/>
            <person name="Barbe V."/>
            <person name="De Berardinis V."/>
            <person name="Ureta-Vidal A."/>
            <person name="Pelletier E."/>
            <person name="Vico V."/>
            <person name="Anthouard V."/>
            <person name="Rowen L."/>
            <person name="Madan A."/>
            <person name="Qin S."/>
            <person name="Sun H."/>
            <person name="Du H."/>
            <person name="Pepin K."/>
            <person name="Artiguenave F."/>
            <person name="Robert C."/>
            <person name="Cruaud C."/>
            <person name="Bruels T."/>
            <person name="Jaillon O."/>
            <person name="Friedlander L."/>
            <person name="Samson G."/>
            <person name="Brottier P."/>
            <person name="Cure S."/>
            <person name="Segurens B."/>
            <person name="Aniere F."/>
            <person name="Samain S."/>
            <person name="Crespeau H."/>
            <person name="Abbasi N."/>
            <person name="Aiach N."/>
            <person name="Boscus D."/>
            <person name="Dickhoff R."/>
            <person name="Dors M."/>
            <person name="Dubois I."/>
            <person name="Friedman C."/>
            <person name="Gouyvenoux M."/>
            <person name="James R."/>
            <person name="Madan A."/>
            <person name="Mairey-Estrada B."/>
            <person name="Mangenot S."/>
            <person name="Martins N."/>
            <person name="Menard M."/>
            <person name="Oztas S."/>
            <person name="Ratcliffe A."/>
            <person name="Shaffer T."/>
            <person name="Trask B."/>
            <person name="Vacherie B."/>
            <person name="Bellemere C."/>
            <person name="Belser C."/>
            <person name="Besnard-Gonnet M."/>
            <person name="Bartol-Mavel D."/>
            <person name="Boutard M."/>
            <person name="Briez-Silla S."/>
            <person name="Combette S."/>
            <person name="Dufosse-Laurent V."/>
            <person name="Ferron C."/>
            <person name="Lechaplais C."/>
            <person name="Louesse C."/>
            <person name="Muselet D."/>
            <person name="Magdelenat G."/>
            <person name="Pateau E."/>
            <person name="Petit E."/>
            <person name="Sirvain-Trukniewicz P."/>
            <person name="Trybou A."/>
            <person name="Vega-Czarny N."/>
            <person name="Bataille E."/>
            <person name="Bluet E."/>
            <person name="Bordelais I."/>
            <person name="Dubois M."/>
            <person name="Dumont C."/>
            <person name="Guerin T."/>
            <person name="Haffray S."/>
            <person name="Hammadi R."/>
            <person name="Muanga J."/>
            <person name="Pellouin V."/>
            <person name="Robert D."/>
            <person name="Wunderle E."/>
            <person name="Gauguet G."/>
            <person name="Roy A."/>
            <person name="Sainte-Marthe L."/>
            <person name="Verdier J."/>
            <person name="Verdier-Discala C."/>
            <person name="Hillier L.W."/>
            <person name="Fulton L."/>
            <person name="McPherson J."/>
            <person name="Matsuda F."/>
            <person name="Wilson R."/>
            <person name="Scarpelli C."/>
            <person name="Gyapay G."/>
            <person name="Wincker P."/>
            <person name="Saurin W."/>
            <person name="Quetier F."/>
            <person name="Waterston R."/>
            <person name="Hood L."/>
            <person name="Weissenbach J."/>
        </authorList>
    </citation>
    <scope>NUCLEOTIDE SEQUENCE [LARGE SCALE GENOMIC DNA]</scope>
</reference>
<reference key="4">
    <citation type="journal article" date="2004" name="Genome Res.">
        <title>The status, quality, and expansion of the NIH full-length cDNA project: the Mammalian Gene Collection (MGC).</title>
        <authorList>
            <consortium name="The MGC Project Team"/>
        </authorList>
    </citation>
    <scope>NUCLEOTIDE SEQUENCE [LARGE SCALE MRNA] (ISOFORM 1)</scope>
    <source>
        <tissue>Brain</tissue>
    </source>
</reference>
<reference key="5">
    <citation type="journal article" date="2011" name="BMC Syst. Biol.">
        <title>Initial characterization of the human central proteome.</title>
        <authorList>
            <person name="Burkard T.R."/>
            <person name="Planyavsky M."/>
            <person name="Kaupe I."/>
            <person name="Breitwieser F.P."/>
            <person name="Buerckstuemmer T."/>
            <person name="Bennett K.L."/>
            <person name="Superti-Furga G."/>
            <person name="Colinge J."/>
        </authorList>
    </citation>
    <scope>IDENTIFICATION BY MASS SPECTROMETRY [LARGE SCALE ANALYSIS]</scope>
</reference>
<reference key="6">
    <citation type="journal article" date="2018" name="Genet. Med.">
        <title>Mitochondrial oxodicarboxylate carrier deficiency is associated with mitochondrial DNA depletion and spinal muscular atrophy-like disease.</title>
        <authorList>
            <person name="Boczonadi V."/>
            <person name="King M.S."/>
            <person name="Smith A.C."/>
            <person name="Olahova M."/>
            <person name="Bansagi B."/>
            <person name="Roos A."/>
            <person name="Eyassu F."/>
            <person name="Borchers C."/>
            <person name="Ramesh V."/>
            <person name="Lochmueller H."/>
            <person name="Polvikoski T."/>
            <person name="Whittaker R.G."/>
            <person name="Pyle A."/>
            <person name="Griffin H."/>
            <person name="Taylor R.W."/>
            <person name="Chinnery P.F."/>
            <person name="Robinson A.J."/>
            <person name="Kunji E.R.S."/>
            <person name="Horvath R."/>
        </authorList>
    </citation>
    <scope>VARIANT MTDPS18 ARG-232</scope>
    <scope>INVOLVEMENT IN MTDPS18</scope>
    <scope>CHARACTERIZATION OF VARIANT MTDPS18 ARG-232</scope>
    <scope>FUNCTION</scope>
</reference>
<accession>Q9BQT8</accession>
<accession>A8K0L0</accession>
<accession>G3V4L5</accession>
<accession>Q3MJ99</accession>
<organism>
    <name type="scientific">Homo sapiens</name>
    <name type="common">Human</name>
    <dbReference type="NCBI Taxonomy" id="9606"/>
    <lineage>
        <taxon>Eukaryota</taxon>
        <taxon>Metazoa</taxon>
        <taxon>Chordata</taxon>
        <taxon>Craniata</taxon>
        <taxon>Vertebrata</taxon>
        <taxon>Euteleostomi</taxon>
        <taxon>Mammalia</taxon>
        <taxon>Eutheria</taxon>
        <taxon>Euarchontoglires</taxon>
        <taxon>Primates</taxon>
        <taxon>Haplorrhini</taxon>
        <taxon>Catarrhini</taxon>
        <taxon>Hominidae</taxon>
        <taxon>Homo</taxon>
    </lineage>
</organism>
<comment type="function">
    <text evidence="2 7 8">Transports dicarboxylates across the inner membranes of mitochondria by a counter-exchange mechanism (PubMed:11083877). Can transport 2-oxoadipate (2-oxohexanedioate), 2-oxoglutarate, adipate (hexanedioate), glutarate, and to a lesser extent, pimelate (heptanedioate), 2-oxopimelate (2-oxoheptanedioate), 2-aminoadipate (2-aminohexanedioate), oxaloacetate, and citrate (PubMed:11083877). Plays a central role in catabolism of lysine, hydroxylysine, and tryptophan, by transporting common metabolite intermediates (such as 2-oxoadipate) into the mitochondria, where it is converted into acetyl-CoA and can enter the citric acid (TCA) cycle (Probable).</text>
</comment>
<comment type="catalytic activity">
    <reaction evidence="2">
        <text>2-oxoadipate(in) + 2-oxoglutarate(out) = 2-oxoadipate(out) + 2-oxoglutarate(in)</text>
        <dbReference type="Rhea" id="RHEA:71739"/>
        <dbReference type="ChEBI" id="CHEBI:16810"/>
        <dbReference type="ChEBI" id="CHEBI:57499"/>
    </reaction>
</comment>
<comment type="catalytic activity">
    <reaction evidence="2">
        <text>hexanedioate(in) + 2-oxoglutarate(out) = hexanedioate(out) + 2-oxoglutarate(in)</text>
        <dbReference type="Rhea" id="RHEA:71743"/>
        <dbReference type="ChEBI" id="CHEBI:16810"/>
        <dbReference type="ChEBI" id="CHEBI:17128"/>
    </reaction>
</comment>
<comment type="catalytic activity">
    <reaction evidence="2">
        <text>L-2-aminoadipate(in) + 2-oxoglutarate(out) = L-2-aminoadipate(out) + 2-oxoglutarate(in)</text>
        <dbReference type="Rhea" id="RHEA:71747"/>
        <dbReference type="ChEBI" id="CHEBI:16810"/>
        <dbReference type="ChEBI" id="CHEBI:58672"/>
    </reaction>
</comment>
<comment type="catalytic activity">
    <reaction evidence="2">
        <text>glutarate(in) + 2-oxoglutarate(out) = glutarate(out) + 2-oxoglutarate(in)</text>
        <dbReference type="Rhea" id="RHEA:71751"/>
        <dbReference type="ChEBI" id="CHEBI:16810"/>
        <dbReference type="ChEBI" id="CHEBI:30921"/>
    </reaction>
</comment>
<comment type="catalytic activity">
    <reaction evidence="2">
        <text>2-oxoheptanedioate(in) + 2-oxoglutarate(out) = 2-oxoheptanedioate(out) + 2-oxoglutarate(in)</text>
        <dbReference type="Rhea" id="RHEA:71755"/>
        <dbReference type="ChEBI" id="CHEBI:16810"/>
        <dbReference type="ChEBI" id="CHEBI:72701"/>
    </reaction>
</comment>
<comment type="catalytic activity">
    <reaction evidence="2">
        <text>heptanedioate(in) + 2-oxoglutarate(out) = heptanedioate(out) + 2-oxoglutarate(in)</text>
        <dbReference type="Rhea" id="RHEA:71759"/>
        <dbReference type="ChEBI" id="CHEBI:16810"/>
        <dbReference type="ChEBI" id="CHEBI:36165"/>
    </reaction>
</comment>
<comment type="catalytic activity">
    <reaction evidence="2">
        <text>citrate(in) + 2-oxoglutarate(out) = citrate(out) + 2-oxoglutarate(in)</text>
        <dbReference type="Rhea" id="RHEA:71763"/>
        <dbReference type="ChEBI" id="CHEBI:16810"/>
        <dbReference type="ChEBI" id="CHEBI:16947"/>
    </reaction>
</comment>
<comment type="subcellular location">
    <subcellularLocation>
        <location>Mitochondrion inner membrane</location>
        <topology>Multi-pass membrane protein</topology>
    </subcellularLocation>
</comment>
<comment type="alternative products">
    <event type="alternative splicing"/>
    <isoform>
        <id>Q9BQT8-1</id>
        <name>1</name>
        <sequence type="displayed"/>
    </isoform>
    <isoform>
        <id>Q9BQT8-2</id>
        <name>2</name>
        <sequence type="described" ref="VSP_046690"/>
    </isoform>
</comment>
<comment type="tissue specificity">
    <text evidence="2">Expressed in placenta, gall bladder and colon.</text>
</comment>
<comment type="disease" evidence="3">
    <disease id="DI-05790">
        <name>Mitochondrial DNA depletion syndrome 18</name>
        <acronym>MTDPS18</acronym>
        <description>An autosomal recessive mitochondrial disorder characterized by early-onset progressive weakness and atrophy of the distal limb muscles, loss of ambulation, and atrophy of the intrinsic hand muscles with clawed hands. Additional features include scoliosis, hypo- or hyperreflexia, and decreased pulmonary vital capacity. Examination of skeletal muscle shows mitochondrial respiratory chain deficiencies involving complexes I and IV, associated with mtDNA depletion.</description>
        <dbReference type="MIM" id="618811"/>
    </disease>
    <text>The disease may be caused by variants affecting the gene represented in this entry.</text>
</comment>
<comment type="similarity">
    <text evidence="6">Belongs to the mitochondrial carrier (TC 2.A.29) family.</text>
</comment>
<sequence length="299" mass="33303">MSAKPEVSLVREASRQIVAGGSAGLVEICLMHPLDVVKTRFQIQRCATDPNSYKSLVDSFRMIFQMEGLFGFYKGILPPILAETPKRAVKFFTFEQYKKLLGYVSLSPALTFAIAGLGSGLTEAIVVNPFEVVKVGLQANRNTFAEQPSTVGYARQIIKKEGWGLQGLNKGLTATLGRHGVFNMVYFGFYYNVKNMIPVNKDPILEFWRKFGIGLLSGTIASVINIPFDVAKSRIQGPQPVPGEIKYRTCFKTMATVYQEEGILALYKGLLPKIMRLGPGGAVMLLVYEYTYSWLQENW</sequence>
<dbReference type="EMBL" id="AJ278148">
    <property type="protein sequence ID" value="CAC27562.1"/>
    <property type="molecule type" value="mRNA"/>
</dbReference>
<dbReference type="EMBL" id="AK289575">
    <property type="protein sequence ID" value="BAF82264.1"/>
    <property type="molecule type" value="mRNA"/>
</dbReference>
<dbReference type="EMBL" id="AL079303">
    <property type="status" value="NOT_ANNOTATED_CDS"/>
    <property type="molecule type" value="Genomic_DNA"/>
</dbReference>
<dbReference type="EMBL" id="AL079304">
    <property type="status" value="NOT_ANNOTATED_CDS"/>
    <property type="molecule type" value="Genomic_DNA"/>
</dbReference>
<dbReference type="EMBL" id="AL121775">
    <property type="status" value="NOT_ANNOTATED_CDS"/>
    <property type="molecule type" value="Genomic_DNA"/>
</dbReference>
<dbReference type="EMBL" id="AL162464">
    <property type="status" value="NOT_ANNOTATED_CDS"/>
    <property type="molecule type" value="Genomic_DNA"/>
</dbReference>
<dbReference type="EMBL" id="BC101521">
    <property type="protein sequence ID" value="AAI01522.1"/>
    <property type="molecule type" value="mRNA"/>
</dbReference>
<dbReference type="EMBL" id="BC113365">
    <property type="protein sequence ID" value="AAI13366.1"/>
    <property type="molecule type" value="mRNA"/>
</dbReference>
<dbReference type="CCDS" id="CCDS55913.1">
    <molecule id="Q9BQT8-2"/>
</dbReference>
<dbReference type="CCDS" id="CCDS9663.1">
    <molecule id="Q9BQT8-1"/>
</dbReference>
<dbReference type="RefSeq" id="NP_001164641.1">
    <molecule id="Q9BQT8-2"/>
    <property type="nucleotide sequence ID" value="NM_001171170.2"/>
</dbReference>
<dbReference type="RefSeq" id="NP_085134.1">
    <molecule id="Q9BQT8-1"/>
    <property type="nucleotide sequence ID" value="NM_030631.4"/>
</dbReference>
<dbReference type="SMR" id="Q9BQT8"/>
<dbReference type="BioGRID" id="124629">
    <property type="interactions" value="22"/>
</dbReference>
<dbReference type="FunCoup" id="Q9BQT8">
    <property type="interactions" value="436"/>
</dbReference>
<dbReference type="IntAct" id="Q9BQT8">
    <property type="interactions" value="17"/>
</dbReference>
<dbReference type="STRING" id="9606.ENSP00000329452"/>
<dbReference type="BindingDB" id="Q9BQT8"/>
<dbReference type="ChEMBL" id="CHEMBL4680040"/>
<dbReference type="DrugBank" id="DB09154">
    <property type="generic name" value="Sodium citrate"/>
</dbReference>
<dbReference type="TCDB" id="2.A.29.2.4">
    <property type="family name" value="the mitochondrial carrier (mc) family"/>
</dbReference>
<dbReference type="iPTMnet" id="Q9BQT8"/>
<dbReference type="PhosphoSitePlus" id="Q9BQT8"/>
<dbReference type="BioMuta" id="SLC25A21"/>
<dbReference type="jPOST" id="Q9BQT8"/>
<dbReference type="MassIVE" id="Q9BQT8"/>
<dbReference type="PaxDb" id="9606-ENSP00000329452"/>
<dbReference type="PeptideAtlas" id="Q9BQT8"/>
<dbReference type="ProteomicsDB" id="33264"/>
<dbReference type="ProteomicsDB" id="78721">
    <molecule id="Q9BQT8-1"/>
</dbReference>
<dbReference type="Pumba" id="Q9BQT8"/>
<dbReference type="Antibodypedia" id="32">
    <property type="antibodies" value="148 antibodies from 28 providers"/>
</dbReference>
<dbReference type="DNASU" id="89874"/>
<dbReference type="Ensembl" id="ENST00000331299.6">
    <molecule id="Q9BQT8-1"/>
    <property type="protein sequence ID" value="ENSP00000329452.5"/>
    <property type="gene ID" value="ENSG00000183032.12"/>
</dbReference>
<dbReference type="Ensembl" id="ENST00000555449.5">
    <molecule id="Q9BQT8-2"/>
    <property type="protein sequence ID" value="ENSP00000451873.1"/>
    <property type="gene ID" value="ENSG00000183032.12"/>
</dbReference>
<dbReference type="GeneID" id="89874"/>
<dbReference type="KEGG" id="hsa:89874"/>
<dbReference type="MANE-Select" id="ENST00000331299.6">
    <property type="protein sequence ID" value="ENSP00000329452.5"/>
    <property type="RefSeq nucleotide sequence ID" value="NM_030631.4"/>
    <property type="RefSeq protein sequence ID" value="NP_085134.1"/>
</dbReference>
<dbReference type="UCSC" id="uc001wtz.3">
    <molecule id="Q9BQT8-1"/>
    <property type="organism name" value="human"/>
</dbReference>
<dbReference type="AGR" id="HGNC:14411"/>
<dbReference type="CTD" id="89874"/>
<dbReference type="DisGeNET" id="89874"/>
<dbReference type="GeneCards" id="SLC25A21"/>
<dbReference type="HGNC" id="HGNC:14411">
    <property type="gene designation" value="SLC25A21"/>
</dbReference>
<dbReference type="HPA" id="ENSG00000183032">
    <property type="expression patterns" value="Tissue enhanced (bone)"/>
</dbReference>
<dbReference type="MalaCards" id="SLC25A21"/>
<dbReference type="MIM" id="607571">
    <property type="type" value="gene"/>
</dbReference>
<dbReference type="MIM" id="618811">
    <property type="type" value="phenotype"/>
</dbReference>
<dbReference type="neXtProt" id="NX_Q9BQT8"/>
<dbReference type="OpenTargets" id="ENSG00000183032"/>
<dbReference type="PharmGKB" id="PA37880"/>
<dbReference type="VEuPathDB" id="HostDB:ENSG00000183032"/>
<dbReference type="eggNOG" id="KOG0754">
    <property type="taxonomic scope" value="Eukaryota"/>
</dbReference>
<dbReference type="GeneTree" id="ENSGT00730000111119"/>
<dbReference type="HOGENOM" id="CLU_015166_5_2_1"/>
<dbReference type="InParanoid" id="Q9BQT8"/>
<dbReference type="OMA" id="LPFQYQF"/>
<dbReference type="OrthoDB" id="434783at2759"/>
<dbReference type="PAN-GO" id="Q9BQT8">
    <property type="GO annotations" value="0 GO annotations based on evolutionary models"/>
</dbReference>
<dbReference type="PhylomeDB" id="Q9BQT8"/>
<dbReference type="TreeFam" id="TF314035"/>
<dbReference type="PathwayCommons" id="Q9BQT8"/>
<dbReference type="Reactome" id="R-HSA-71064">
    <property type="pathway name" value="Lysine catabolism"/>
</dbReference>
<dbReference type="SignaLink" id="Q9BQT8"/>
<dbReference type="BioGRID-ORCS" id="89874">
    <property type="hits" value="8 hits in 1172 CRISPR screens"/>
</dbReference>
<dbReference type="ChiTaRS" id="SLC25A21">
    <property type="organism name" value="human"/>
</dbReference>
<dbReference type="GeneWiki" id="SLC25A21"/>
<dbReference type="GenomeRNAi" id="89874"/>
<dbReference type="Pharos" id="Q9BQT8">
    <property type="development level" value="Tchem"/>
</dbReference>
<dbReference type="PRO" id="PR:Q9BQT8"/>
<dbReference type="Proteomes" id="UP000005640">
    <property type="component" value="Chromosome 14"/>
</dbReference>
<dbReference type="RNAct" id="Q9BQT8">
    <property type="molecule type" value="protein"/>
</dbReference>
<dbReference type="Bgee" id="ENSG00000183032">
    <property type="expression patterns" value="Expressed in primordial germ cell in gonad and 98 other cell types or tissues"/>
</dbReference>
<dbReference type="GO" id="GO:0005743">
    <property type="term" value="C:mitochondrial inner membrane"/>
    <property type="evidence" value="ECO:0000250"/>
    <property type="project" value="FlyBase"/>
</dbReference>
<dbReference type="GO" id="GO:0005739">
    <property type="term" value="C:mitochondrion"/>
    <property type="evidence" value="ECO:0006056"/>
    <property type="project" value="FlyBase"/>
</dbReference>
<dbReference type="GO" id="GO:0015139">
    <property type="term" value="F:alpha-ketoglutarate transmembrane transporter activity"/>
    <property type="evidence" value="ECO:0000314"/>
    <property type="project" value="FlyBase"/>
</dbReference>
<dbReference type="GO" id="GO:0015297">
    <property type="term" value="F:antiporter activity"/>
    <property type="evidence" value="ECO:0007669"/>
    <property type="project" value="UniProtKB-KW"/>
</dbReference>
<dbReference type="GO" id="GO:0006869">
    <property type="term" value="P:lipid transport"/>
    <property type="evidence" value="ECO:0007669"/>
    <property type="project" value="UniProtKB-KW"/>
</dbReference>
<dbReference type="GO" id="GO:0006554">
    <property type="term" value="P:lysine catabolic process"/>
    <property type="evidence" value="ECO:0000304"/>
    <property type="project" value="Reactome"/>
</dbReference>
<dbReference type="GO" id="GO:1990550">
    <property type="term" value="P:mitochondrial alpha-ketoglutarate transmembrane transport"/>
    <property type="evidence" value="ECO:0000315"/>
    <property type="project" value="FlyBase"/>
</dbReference>
<dbReference type="FunFam" id="1.50.40.10:FF:000048">
    <property type="entry name" value="mitochondrial 2-oxodicarboxylate carrier isoform X2"/>
    <property type="match status" value="1"/>
</dbReference>
<dbReference type="FunFam" id="1.50.40.10:FF:000056">
    <property type="entry name" value="mitochondrial 2-oxodicarboxylate carrier isoform X2"/>
    <property type="match status" value="1"/>
</dbReference>
<dbReference type="Gene3D" id="1.50.40.10">
    <property type="entry name" value="Mitochondrial carrier domain"/>
    <property type="match status" value="2"/>
</dbReference>
<dbReference type="InterPro" id="IPR002067">
    <property type="entry name" value="Mit_carrier"/>
</dbReference>
<dbReference type="InterPro" id="IPR051752">
    <property type="entry name" value="Mito_2-oxodicarb_carrier"/>
</dbReference>
<dbReference type="InterPro" id="IPR018108">
    <property type="entry name" value="Mitochondrial_sb/sol_carrier"/>
</dbReference>
<dbReference type="InterPro" id="IPR023395">
    <property type="entry name" value="Mt_carrier_dom_sf"/>
</dbReference>
<dbReference type="PANTHER" id="PTHR46356">
    <property type="entry name" value="MITOCHONDRIAL 2-OXODICARBOXYLATE CARRIER"/>
    <property type="match status" value="1"/>
</dbReference>
<dbReference type="PANTHER" id="PTHR46356:SF1">
    <property type="entry name" value="MITOCHONDRIAL 2-OXODICARBOXYLATE CARRIER"/>
    <property type="match status" value="1"/>
</dbReference>
<dbReference type="Pfam" id="PF00153">
    <property type="entry name" value="Mito_carr"/>
    <property type="match status" value="3"/>
</dbReference>
<dbReference type="PRINTS" id="PR00926">
    <property type="entry name" value="MITOCARRIER"/>
</dbReference>
<dbReference type="SUPFAM" id="SSF103506">
    <property type="entry name" value="Mitochondrial carrier"/>
    <property type="match status" value="1"/>
</dbReference>
<dbReference type="PROSITE" id="PS50920">
    <property type="entry name" value="SOLCAR"/>
    <property type="match status" value="3"/>
</dbReference>
<keyword id="KW-0025">Alternative splicing</keyword>
<keyword id="KW-0050">Antiport</keyword>
<keyword id="KW-0225">Disease variant</keyword>
<keyword id="KW-0445">Lipid transport</keyword>
<keyword id="KW-0472">Membrane</keyword>
<keyword id="KW-0496">Mitochondrion</keyword>
<keyword id="KW-0999">Mitochondrion inner membrane</keyword>
<keyword id="KW-1274">Primary mitochondrial disease</keyword>
<keyword id="KW-1267">Proteomics identification</keyword>
<keyword id="KW-1185">Reference proteome</keyword>
<keyword id="KW-0677">Repeat</keyword>
<keyword id="KW-0812">Transmembrane</keyword>
<keyword id="KW-1133">Transmembrane helix</keyword>
<keyword id="KW-0813">Transport</keyword>
<gene>
    <name type="primary">SLC25A21</name>
    <name type="synonym">ODC</name>
</gene>
<name>ODC_HUMAN</name>